<feature type="chain" id="PRO_0000447009" description="Ornithine lipid N-methyltransferase">
    <location>
        <begin position="1"/>
        <end position="192"/>
    </location>
</feature>
<reference key="1">
    <citation type="submission" date="2012-02" db="EMBL/GenBank/DDBJ databases">
        <title>Complete sequence of chromosome of Singulisphaera acidiphila DSM 18658.</title>
        <authorList>
            <consortium name="US DOE Joint Genome Institute (JGI-PGF)"/>
            <person name="Lucas S."/>
            <person name="Copeland A."/>
            <person name="Lapidus A."/>
            <person name="Glavina del Rio T."/>
            <person name="Dalin E."/>
            <person name="Tice H."/>
            <person name="Bruce D."/>
            <person name="Goodwin L."/>
            <person name="Pitluck S."/>
            <person name="Peters L."/>
            <person name="Ovchinnikova G."/>
            <person name="Chertkov O."/>
            <person name="Kyrpides N."/>
            <person name="Mavromatis K."/>
            <person name="Ivanova N."/>
            <person name="Brettin T."/>
            <person name="Detter J.C."/>
            <person name="Han C."/>
            <person name="Larimer F."/>
            <person name="Land M."/>
            <person name="Hauser L."/>
            <person name="Markowitz V."/>
            <person name="Cheng J.-F."/>
            <person name="Hugenholtz P."/>
            <person name="Woyke T."/>
            <person name="Wu D."/>
            <person name="Tindall B."/>
            <person name="Pomrenke H."/>
            <person name="Brambilla E."/>
            <person name="Klenk H.-P."/>
            <person name="Eisen J.A."/>
        </authorList>
    </citation>
    <scope>NUCLEOTIDE SEQUENCE [LARGE SCALE GENOMIC DNA]</scope>
    <source>
        <strain>ATCC BAA-1392 / DSM 18658 / VKM B-2454 / MOB10</strain>
    </source>
</reference>
<reference key="2">
    <citation type="journal article" date="2015" name="J. Biol. Chem.">
        <title>OlsG (Sinac_1600) is an ornithine lipid N-methyltransferase from the planctomycete Singulisphaera acidiphila.</title>
        <authorList>
            <person name="Escobedo-Hinojosa W.I."/>
            <person name="Vences-Guzman M.A."/>
            <person name="Schubotz F."/>
            <person name="Sandoval-Calderon M."/>
            <person name="Summons R.E."/>
            <person name="Lopez-Lara I.M."/>
            <person name="Geiger O."/>
            <person name="Sohlenkamp C."/>
        </authorList>
    </citation>
    <scope>FUNCTION</scope>
    <scope>CATALYTIC ACTIVITY</scope>
    <scope>BIOPHYSICOCHEMICAL PROPERTIES</scope>
    <source>
        <strain>ATCC BAA-1392 / DSM 18658 / VKM B-2454 / MOB10</strain>
    </source>
</reference>
<comment type="function">
    <text evidence="1">Catalyzes the 3-fold methylation of ornithine lipids. Forms ornithine lipids that are mono-, di-, and trimethylated on the delta-nitrogen of the ornithine head group.</text>
</comment>
<comment type="catalytic activity">
    <reaction evidence="1">
        <text>an N(2)-[(3R)-3-(2-saturated-acyloxy)acyl]-L-ornithine lipid + 3 S-adenosyl-L-methionine = an N,N,N-trimethylornithine lipid + 3 S-adenosyl-L-homocysteine + 3 H(+)</text>
        <dbReference type="Rhea" id="RHEA:20461"/>
        <dbReference type="ChEBI" id="CHEBI:15378"/>
        <dbReference type="ChEBI" id="CHEBI:57856"/>
        <dbReference type="ChEBI" id="CHEBI:59789"/>
        <dbReference type="ChEBI" id="CHEBI:138473"/>
        <dbReference type="ChEBI" id="CHEBI:138481"/>
        <dbReference type="EC" id="2.1.1.344"/>
    </reaction>
    <physiologicalReaction direction="left-to-right" evidence="1">
        <dbReference type="Rhea" id="RHEA:20462"/>
    </physiologicalReaction>
</comment>
<comment type="biophysicochemical properties">
    <phDependence>
        <text evidence="1">Optimum pH is 8.</text>
    </phDependence>
</comment>
<comment type="similarity">
    <text evidence="3">Belongs to the methyltransferase superfamily.</text>
</comment>
<proteinExistence type="evidence at protein level"/>
<dbReference type="EC" id="2.1.1.344" evidence="1"/>
<dbReference type="EMBL" id="CP003364">
    <property type="protein sequence ID" value="AGA25979.1"/>
    <property type="molecule type" value="Genomic_DNA"/>
</dbReference>
<dbReference type="RefSeq" id="WP_015245149.1">
    <property type="nucleotide sequence ID" value="NC_019892.1"/>
</dbReference>
<dbReference type="SMR" id="L0D9B6"/>
<dbReference type="STRING" id="886293.Sinac_1600"/>
<dbReference type="KEGG" id="saci:Sinac_1600"/>
<dbReference type="eggNOG" id="COG3963">
    <property type="taxonomic scope" value="Bacteria"/>
</dbReference>
<dbReference type="HOGENOM" id="CLU_085338_2_1_0"/>
<dbReference type="OrthoDB" id="9805585at2"/>
<dbReference type="BioCyc" id="MetaCyc:MONOMER-20224"/>
<dbReference type="BRENDA" id="2.1.1.344">
    <property type="organism ID" value="15331"/>
</dbReference>
<dbReference type="Proteomes" id="UP000010798">
    <property type="component" value="Chromosome"/>
</dbReference>
<dbReference type="GO" id="GO:0000179">
    <property type="term" value="F:rRNA (adenine-N6,N6-)-dimethyltransferase activity"/>
    <property type="evidence" value="ECO:0007669"/>
    <property type="project" value="InterPro"/>
</dbReference>
<dbReference type="CDD" id="cd02440">
    <property type="entry name" value="AdoMet_MTases"/>
    <property type="match status" value="1"/>
</dbReference>
<dbReference type="Gene3D" id="3.40.50.150">
    <property type="entry name" value="Vaccinia Virus protein VP39"/>
    <property type="match status" value="1"/>
</dbReference>
<dbReference type="InterPro" id="IPR041698">
    <property type="entry name" value="Methyltransf_25"/>
</dbReference>
<dbReference type="InterPro" id="IPR048196">
    <property type="entry name" value="Ornithlipidmtase_OlsG"/>
</dbReference>
<dbReference type="InterPro" id="IPR020596">
    <property type="entry name" value="rRNA_Ade_Mease_Trfase_CS"/>
</dbReference>
<dbReference type="InterPro" id="IPR020598">
    <property type="entry name" value="rRNA_Ade_methylase_Trfase_N"/>
</dbReference>
<dbReference type="InterPro" id="IPR029063">
    <property type="entry name" value="SAM-dependent_MTases_sf"/>
</dbReference>
<dbReference type="NCBIfam" id="NF041658">
    <property type="entry name" value="ornithlipidmtase_OlsG"/>
    <property type="match status" value="1"/>
</dbReference>
<dbReference type="Pfam" id="PF13649">
    <property type="entry name" value="Methyltransf_25"/>
    <property type="match status" value="1"/>
</dbReference>
<dbReference type="SMART" id="SM00650">
    <property type="entry name" value="rADc"/>
    <property type="match status" value="1"/>
</dbReference>
<dbReference type="SUPFAM" id="SSF53335">
    <property type="entry name" value="S-adenosyl-L-methionine-dependent methyltransferases"/>
    <property type="match status" value="1"/>
</dbReference>
<sequence length="192" mass="22068">MKDFFLFLGKFFKHGTAIASLAPSSPWLSRTTVRNIPWENARVVVELGAGTGPITKVIADRVHPDCRVIVLERDPDFARLLRERFANRANFDVVEGDVRDLTQILQQRGIEQADFVVSGLPVPSFPKELQRDLFRVVKQVLAPSGTFNQITEMPWVYQRFYRRFFDEVTFVFEPRNLPPAGAYFCRGVKESF</sequence>
<organism>
    <name type="scientific">Singulisphaera acidiphila (strain ATCC BAA-1392 / DSM 18658 / VKM B-2454 / MOB10)</name>
    <dbReference type="NCBI Taxonomy" id="886293"/>
    <lineage>
        <taxon>Bacteria</taxon>
        <taxon>Pseudomonadati</taxon>
        <taxon>Planctomycetota</taxon>
        <taxon>Planctomycetia</taxon>
        <taxon>Isosphaerales</taxon>
        <taxon>Isosphaeraceae</taxon>
        <taxon>Singulisphaera</taxon>
    </lineage>
</organism>
<keyword id="KW-0489">Methyltransferase</keyword>
<keyword id="KW-1185">Reference proteome</keyword>
<keyword id="KW-0949">S-adenosyl-L-methionine</keyword>
<keyword id="KW-0808">Transferase</keyword>
<accession>L0D9B6</accession>
<evidence type="ECO:0000269" key="1">
    <source>
    </source>
</evidence>
<evidence type="ECO:0000303" key="2">
    <source>
    </source>
</evidence>
<evidence type="ECO:0000305" key="3"/>
<evidence type="ECO:0000312" key="4">
    <source>
        <dbReference type="EMBL" id="AGA25979.1"/>
    </source>
</evidence>
<gene>
    <name evidence="2" type="primary">olsG</name>
    <name evidence="4" type="ordered locus">Sinac_1600</name>
</gene>
<protein>
    <recommendedName>
        <fullName evidence="2">Ornithine lipid N-methyltransferase</fullName>
        <shortName evidence="2">OL N-methyltransferase</shortName>
        <ecNumber evidence="1">2.1.1.344</ecNumber>
    </recommendedName>
    <alternativeName>
        <fullName evidence="2">Ornithine lipid synthesis G</fullName>
    </alternativeName>
</protein>
<name>OLSG_SINAD</name>